<comment type="function">
    <text evidence="1">Non-essential, abundant cell division factor that is required for proper Z-ring formation. It is recruited early to the divisome by direct interaction with FtsZ, stimulating Z-ring assembly and thereby promoting cell division earlier in the cell cycle. Its recruitment to the Z-ring requires functional FtsA or ZipA.</text>
</comment>
<comment type="subunit">
    <text evidence="1">Homodimer. The ends of the coiled-coil dimer bind to each other, forming polymers. Interacts with FtsZ.</text>
</comment>
<comment type="subcellular location">
    <subcellularLocation>
        <location evidence="1">Cytoplasm</location>
    </subcellularLocation>
    <text evidence="1">Localizes to the septum at mid-cell, in a FtsZ-like pattern.</text>
</comment>
<comment type="similarity">
    <text evidence="1">Belongs to the ZapB family.</text>
</comment>
<accession>B5QXL7</accession>
<evidence type="ECO:0000255" key="1">
    <source>
        <dbReference type="HAMAP-Rule" id="MF_01196"/>
    </source>
</evidence>
<evidence type="ECO:0000256" key="2">
    <source>
        <dbReference type="SAM" id="MobiDB-lite"/>
    </source>
</evidence>
<proteinExistence type="inferred from homology"/>
<protein>
    <recommendedName>
        <fullName evidence="1">Cell division protein ZapB</fullName>
    </recommendedName>
</protein>
<gene>
    <name evidence="1" type="primary">zapB</name>
    <name type="ordered locus">SEN3878</name>
</gene>
<sequence length="79" mass="9312">MSLEVFEKLEAKVQQAIDTITLLQMEIEELKEKNNSLTQEVQSAQHQREELERENNSLKEQQSGWQERLQALLGRMEEV</sequence>
<reference key="1">
    <citation type="journal article" date="2008" name="Genome Res.">
        <title>Comparative genome analysis of Salmonella enteritidis PT4 and Salmonella gallinarum 287/91 provides insights into evolutionary and host adaptation pathways.</title>
        <authorList>
            <person name="Thomson N.R."/>
            <person name="Clayton D.J."/>
            <person name="Windhorst D."/>
            <person name="Vernikos G."/>
            <person name="Davidson S."/>
            <person name="Churcher C."/>
            <person name="Quail M.A."/>
            <person name="Stevens M."/>
            <person name="Jones M.A."/>
            <person name="Watson M."/>
            <person name="Barron A."/>
            <person name="Layton A."/>
            <person name="Pickard D."/>
            <person name="Kingsley R.A."/>
            <person name="Bignell A."/>
            <person name="Clark L."/>
            <person name="Harris B."/>
            <person name="Ormond D."/>
            <person name="Abdellah Z."/>
            <person name="Brooks K."/>
            <person name="Cherevach I."/>
            <person name="Chillingworth T."/>
            <person name="Woodward J."/>
            <person name="Norberczak H."/>
            <person name="Lord A."/>
            <person name="Arrowsmith C."/>
            <person name="Jagels K."/>
            <person name="Moule S."/>
            <person name="Mungall K."/>
            <person name="Saunders M."/>
            <person name="Whitehead S."/>
            <person name="Chabalgoity J.A."/>
            <person name="Maskell D."/>
            <person name="Humphreys T."/>
            <person name="Roberts M."/>
            <person name="Barrow P.A."/>
            <person name="Dougan G."/>
            <person name="Parkhill J."/>
        </authorList>
    </citation>
    <scope>NUCLEOTIDE SEQUENCE [LARGE SCALE GENOMIC DNA]</scope>
    <source>
        <strain>P125109</strain>
    </source>
</reference>
<name>ZAPB_SALEP</name>
<feature type="chain" id="PRO_1000138445" description="Cell division protein ZapB">
    <location>
        <begin position="1"/>
        <end position="79"/>
    </location>
</feature>
<feature type="region of interest" description="Disordered" evidence="2">
    <location>
        <begin position="36"/>
        <end position="63"/>
    </location>
</feature>
<feature type="coiled-coil region" evidence="1">
    <location>
        <begin position="3"/>
        <end position="79"/>
    </location>
</feature>
<feature type="compositionally biased region" description="Polar residues" evidence="2">
    <location>
        <begin position="36"/>
        <end position="45"/>
    </location>
</feature>
<feature type="compositionally biased region" description="Basic and acidic residues" evidence="2">
    <location>
        <begin position="46"/>
        <end position="57"/>
    </location>
</feature>
<organism>
    <name type="scientific">Salmonella enteritidis PT4 (strain P125109)</name>
    <dbReference type="NCBI Taxonomy" id="550537"/>
    <lineage>
        <taxon>Bacteria</taxon>
        <taxon>Pseudomonadati</taxon>
        <taxon>Pseudomonadota</taxon>
        <taxon>Gammaproteobacteria</taxon>
        <taxon>Enterobacterales</taxon>
        <taxon>Enterobacteriaceae</taxon>
        <taxon>Salmonella</taxon>
    </lineage>
</organism>
<keyword id="KW-0131">Cell cycle</keyword>
<keyword id="KW-0132">Cell division</keyword>
<keyword id="KW-0175">Coiled coil</keyword>
<keyword id="KW-0963">Cytoplasm</keyword>
<keyword id="KW-0717">Septation</keyword>
<dbReference type="EMBL" id="AM933172">
    <property type="protein sequence ID" value="CAR35452.1"/>
    <property type="molecule type" value="Genomic_DNA"/>
</dbReference>
<dbReference type="RefSeq" id="WP_000051370.1">
    <property type="nucleotide sequence ID" value="NC_011294.1"/>
</dbReference>
<dbReference type="SMR" id="B5QXL7"/>
<dbReference type="KEGG" id="set:SEN3878"/>
<dbReference type="HOGENOM" id="CLU_171174_2_0_6"/>
<dbReference type="Proteomes" id="UP000000613">
    <property type="component" value="Chromosome"/>
</dbReference>
<dbReference type="GO" id="GO:0005737">
    <property type="term" value="C:cytoplasm"/>
    <property type="evidence" value="ECO:0007669"/>
    <property type="project" value="UniProtKB-SubCell"/>
</dbReference>
<dbReference type="GO" id="GO:0000917">
    <property type="term" value="P:division septum assembly"/>
    <property type="evidence" value="ECO:0007669"/>
    <property type="project" value="UniProtKB-KW"/>
</dbReference>
<dbReference type="GO" id="GO:0043093">
    <property type="term" value="P:FtsZ-dependent cytokinesis"/>
    <property type="evidence" value="ECO:0007669"/>
    <property type="project" value="UniProtKB-UniRule"/>
</dbReference>
<dbReference type="FunFam" id="1.20.5.340:FF:000014">
    <property type="entry name" value="Cell division protein ZapB"/>
    <property type="match status" value="1"/>
</dbReference>
<dbReference type="Gene3D" id="1.20.5.340">
    <property type="match status" value="1"/>
</dbReference>
<dbReference type="HAMAP" id="MF_01196">
    <property type="entry name" value="ZapB"/>
    <property type="match status" value="1"/>
</dbReference>
<dbReference type="InterPro" id="IPR009252">
    <property type="entry name" value="Cell_div_ZapB"/>
</dbReference>
<dbReference type="NCBIfam" id="NF011951">
    <property type="entry name" value="PRK15422.1"/>
    <property type="match status" value="1"/>
</dbReference>
<dbReference type="Pfam" id="PF06005">
    <property type="entry name" value="ZapB"/>
    <property type="match status" value="1"/>
</dbReference>